<proteinExistence type="inferred from homology"/>
<comment type="similarity">
    <text evidence="1">Belongs to the UPF0178 family.</text>
</comment>
<organism>
    <name type="scientific">Trichlorobacter lovleyi (strain ATCC BAA-1151 / DSM 17278 / SZ)</name>
    <name type="common">Geobacter lovleyi</name>
    <dbReference type="NCBI Taxonomy" id="398767"/>
    <lineage>
        <taxon>Bacteria</taxon>
        <taxon>Pseudomonadati</taxon>
        <taxon>Thermodesulfobacteriota</taxon>
        <taxon>Desulfuromonadia</taxon>
        <taxon>Geobacterales</taxon>
        <taxon>Geobacteraceae</taxon>
        <taxon>Trichlorobacter</taxon>
    </lineage>
</organism>
<name>Y658_TRIL1</name>
<gene>
    <name type="ordered locus">Glov_0658</name>
</gene>
<dbReference type="EMBL" id="CP001089">
    <property type="protein sequence ID" value="ACD94384.1"/>
    <property type="molecule type" value="Genomic_DNA"/>
</dbReference>
<dbReference type="RefSeq" id="WP_012468740.1">
    <property type="nucleotide sequence ID" value="NC_010814.1"/>
</dbReference>
<dbReference type="STRING" id="398767.Glov_0658"/>
<dbReference type="KEGG" id="glo:Glov_0658"/>
<dbReference type="eggNOG" id="COG1671">
    <property type="taxonomic scope" value="Bacteria"/>
</dbReference>
<dbReference type="HOGENOM" id="CLU_106619_2_1_7"/>
<dbReference type="OrthoDB" id="9798918at2"/>
<dbReference type="Proteomes" id="UP000002420">
    <property type="component" value="Chromosome"/>
</dbReference>
<dbReference type="CDD" id="cd18720">
    <property type="entry name" value="PIN_YqxD-like"/>
    <property type="match status" value="1"/>
</dbReference>
<dbReference type="HAMAP" id="MF_00489">
    <property type="entry name" value="UPF0178"/>
    <property type="match status" value="1"/>
</dbReference>
<dbReference type="InterPro" id="IPR003791">
    <property type="entry name" value="UPF0178"/>
</dbReference>
<dbReference type="NCBIfam" id="NF001095">
    <property type="entry name" value="PRK00124.1"/>
    <property type="match status" value="1"/>
</dbReference>
<dbReference type="PANTHER" id="PTHR35146">
    <property type="entry name" value="UPF0178 PROTEIN YAII"/>
    <property type="match status" value="1"/>
</dbReference>
<dbReference type="PANTHER" id="PTHR35146:SF1">
    <property type="entry name" value="UPF0178 PROTEIN YAII"/>
    <property type="match status" value="1"/>
</dbReference>
<dbReference type="Pfam" id="PF02639">
    <property type="entry name" value="DUF188"/>
    <property type="match status" value="1"/>
</dbReference>
<reference key="1">
    <citation type="submission" date="2008-05" db="EMBL/GenBank/DDBJ databases">
        <title>Complete sequence of chromosome of Geobacter lovleyi SZ.</title>
        <authorList>
            <consortium name="US DOE Joint Genome Institute"/>
            <person name="Lucas S."/>
            <person name="Copeland A."/>
            <person name="Lapidus A."/>
            <person name="Glavina del Rio T."/>
            <person name="Dalin E."/>
            <person name="Tice H."/>
            <person name="Bruce D."/>
            <person name="Goodwin L."/>
            <person name="Pitluck S."/>
            <person name="Chertkov O."/>
            <person name="Meincke L."/>
            <person name="Brettin T."/>
            <person name="Detter J.C."/>
            <person name="Han C."/>
            <person name="Tapia R."/>
            <person name="Kuske C.R."/>
            <person name="Schmutz J."/>
            <person name="Larimer F."/>
            <person name="Land M."/>
            <person name="Hauser L."/>
            <person name="Kyrpides N."/>
            <person name="Mikhailova N."/>
            <person name="Sung Y."/>
            <person name="Fletcher K.E."/>
            <person name="Ritalahti K.M."/>
            <person name="Loeffler F.E."/>
            <person name="Richardson P."/>
        </authorList>
    </citation>
    <scope>NUCLEOTIDE SEQUENCE [LARGE SCALE GENOMIC DNA]</scope>
    <source>
        <strain>ATCC BAA-1151 / DSM 17278 / SZ</strain>
    </source>
</reference>
<protein>
    <recommendedName>
        <fullName evidence="1">UPF0178 protein Glov_0658</fullName>
    </recommendedName>
</protein>
<keyword id="KW-1185">Reference proteome</keyword>
<evidence type="ECO:0000255" key="1">
    <source>
        <dbReference type="HAMAP-Rule" id="MF_00489"/>
    </source>
</evidence>
<feature type="chain" id="PRO_1000126196" description="UPF0178 protein Glov_0658">
    <location>
        <begin position="1"/>
        <end position="154"/>
    </location>
</feature>
<sequence>MTIWIDADACPRVIKEIVFRASERLNLPVMLVANKPLAKHHAGLISSVVVDDGPDVADDYIAEQATAQDLVITADIPLAARIVAKGAVGIDPRGELYNEDNVGERLSMRDLMQSLRSEGLVQGGPAQFGMTDRQRFASSLDRVLTRMMREAKKQ</sequence>
<accession>B3E3X0</accession>